<name>Y1212_ARCFU</name>
<proteinExistence type="evidence at protein level"/>
<protein>
    <recommendedName>
        <fullName>Uncharacterized protein AF_1212</fullName>
    </recommendedName>
</protein>
<accession>O29056</accession>
<gene>
    <name type="ordered locus">AF_1212</name>
</gene>
<feature type="chain" id="PRO_0000157859" description="Uncharacterized protein AF_1212">
    <location>
        <begin position="1"/>
        <end position="352"/>
    </location>
</feature>
<feature type="helix" evidence="2">
    <location>
        <begin position="209"/>
        <end position="215"/>
    </location>
</feature>
<feature type="strand" evidence="2">
    <location>
        <begin position="219"/>
        <end position="222"/>
    </location>
</feature>
<feature type="strand" evidence="2">
    <location>
        <begin position="232"/>
        <end position="235"/>
    </location>
</feature>
<feature type="helix" evidence="2">
    <location>
        <begin position="240"/>
        <end position="248"/>
    </location>
</feature>
<feature type="strand" evidence="2">
    <location>
        <begin position="251"/>
        <end position="258"/>
    </location>
</feature>
<feature type="helix" evidence="2">
    <location>
        <begin position="262"/>
        <end position="268"/>
    </location>
</feature>
<feature type="strand" evidence="2">
    <location>
        <begin position="274"/>
        <end position="280"/>
    </location>
</feature>
<feature type="helix" evidence="2">
    <location>
        <begin position="287"/>
        <end position="296"/>
    </location>
</feature>
<feature type="strand" evidence="2">
    <location>
        <begin position="300"/>
        <end position="302"/>
    </location>
</feature>
<feature type="helix" evidence="2">
    <location>
        <begin position="307"/>
        <end position="315"/>
    </location>
</feature>
<feature type="strand" evidence="2">
    <location>
        <begin position="322"/>
        <end position="324"/>
    </location>
</feature>
<keyword id="KW-0002">3D-structure</keyword>
<keyword id="KW-1185">Reference proteome</keyword>
<reference key="1">
    <citation type="journal article" date="1997" name="Nature">
        <title>The complete genome sequence of the hyperthermophilic, sulphate-reducing archaeon Archaeoglobus fulgidus.</title>
        <authorList>
            <person name="Klenk H.-P."/>
            <person name="Clayton R.A."/>
            <person name="Tomb J.-F."/>
            <person name="White O."/>
            <person name="Nelson K.E."/>
            <person name="Ketchum K.A."/>
            <person name="Dodson R.J."/>
            <person name="Gwinn M.L."/>
            <person name="Hickey E.K."/>
            <person name="Peterson J.D."/>
            <person name="Richardson D.L."/>
            <person name="Kerlavage A.R."/>
            <person name="Graham D.E."/>
            <person name="Kyrpides N.C."/>
            <person name="Fleischmann R.D."/>
            <person name="Quackenbush J."/>
            <person name="Lee N.H."/>
            <person name="Sutton G.G."/>
            <person name="Gill S.R."/>
            <person name="Kirkness E.F."/>
            <person name="Dougherty B.A."/>
            <person name="McKenney K."/>
            <person name="Adams M.D."/>
            <person name="Loftus B.J."/>
            <person name="Peterson S.N."/>
            <person name="Reich C.I."/>
            <person name="McNeil L.K."/>
            <person name="Badger J.H."/>
            <person name="Glodek A."/>
            <person name="Zhou L."/>
            <person name="Overbeek R."/>
            <person name="Gocayne J.D."/>
            <person name="Weidman J.F."/>
            <person name="McDonald L.A."/>
            <person name="Utterback T.R."/>
            <person name="Cotton M.D."/>
            <person name="Spriggs T."/>
            <person name="Artiach P."/>
            <person name="Kaine B.P."/>
            <person name="Sykes S.M."/>
            <person name="Sadow P.W."/>
            <person name="D'Andrea K.P."/>
            <person name="Bowman C."/>
            <person name="Fujii C."/>
            <person name="Garland S.A."/>
            <person name="Mason T.M."/>
            <person name="Olsen G.J."/>
            <person name="Fraser C.M."/>
            <person name="Smith H.O."/>
            <person name="Woese C.R."/>
            <person name="Venter J.C."/>
        </authorList>
    </citation>
    <scope>NUCLEOTIDE SEQUENCE [LARGE SCALE GENOMIC DNA]</scope>
    <source>
        <strain>ATCC 49558 / DSM 4304 / JCM 9628 / NBRC 100126 / VC-16</strain>
    </source>
</reference>
<comment type="similarity">
    <text evidence="1">To Synechocystis PCC 6803 slr0039.</text>
</comment>
<organism>
    <name type="scientific">Archaeoglobus fulgidus (strain ATCC 49558 / DSM 4304 / JCM 9628 / NBRC 100126 / VC-16)</name>
    <dbReference type="NCBI Taxonomy" id="224325"/>
    <lineage>
        <taxon>Archaea</taxon>
        <taxon>Methanobacteriati</taxon>
        <taxon>Methanobacteriota</taxon>
        <taxon>Archaeoglobi</taxon>
        <taxon>Archaeoglobales</taxon>
        <taxon>Archaeoglobaceae</taxon>
        <taxon>Archaeoglobus</taxon>
    </lineage>
</organism>
<evidence type="ECO:0000305" key="1"/>
<evidence type="ECO:0007829" key="2">
    <source>
        <dbReference type="PDB" id="2IOJ"/>
    </source>
</evidence>
<dbReference type="EMBL" id="AE000782">
    <property type="protein sequence ID" value="AAB90032.1"/>
    <property type="molecule type" value="Genomic_DNA"/>
</dbReference>
<dbReference type="PIR" id="C69401">
    <property type="entry name" value="C69401"/>
</dbReference>
<dbReference type="PDB" id="2IOJ">
    <property type="method" value="X-ray"/>
    <property type="resolution" value="2.15 A"/>
    <property type="chains" value="A/B=200-338"/>
</dbReference>
<dbReference type="PDBsum" id="2IOJ"/>
<dbReference type="SMR" id="O29056"/>
<dbReference type="STRING" id="224325.AF_1212"/>
<dbReference type="PaxDb" id="224325-AF_1212"/>
<dbReference type="EnsemblBacteria" id="AAB90032">
    <property type="protein sequence ID" value="AAB90032"/>
    <property type="gene ID" value="AF_1212"/>
</dbReference>
<dbReference type="KEGG" id="afu:AF_1212"/>
<dbReference type="eggNOG" id="arCOG00099">
    <property type="taxonomic scope" value="Archaea"/>
</dbReference>
<dbReference type="HOGENOM" id="CLU_040984_0_0_2"/>
<dbReference type="OrthoDB" id="50320at2157"/>
<dbReference type="PhylomeDB" id="O29056"/>
<dbReference type="EvolutionaryTrace" id="O29056"/>
<dbReference type="Proteomes" id="UP000002199">
    <property type="component" value="Chromosome"/>
</dbReference>
<dbReference type="Gene3D" id="3.40.1390.20">
    <property type="entry name" value="HprK N-terminal domain-like"/>
    <property type="match status" value="1"/>
</dbReference>
<dbReference type="Gene3D" id="3.40.50.300">
    <property type="entry name" value="P-loop containing nucleotide triphosphate hydrolases"/>
    <property type="match status" value="1"/>
</dbReference>
<dbReference type="InterPro" id="IPR010766">
    <property type="entry name" value="DRTGG"/>
</dbReference>
<dbReference type="InterPro" id="IPR027417">
    <property type="entry name" value="P-loop_NTPase"/>
</dbReference>
<dbReference type="InterPro" id="IPR050500">
    <property type="entry name" value="Phos_Acetyltrans/Butyryltrans"/>
</dbReference>
<dbReference type="InterPro" id="IPR028979">
    <property type="entry name" value="Ser_kin/Pase_Hpr-like_N_sf"/>
</dbReference>
<dbReference type="PANTHER" id="PTHR43356">
    <property type="entry name" value="PHOSPHATE ACETYLTRANSFERASE"/>
    <property type="match status" value="1"/>
</dbReference>
<dbReference type="PANTHER" id="PTHR43356:SF2">
    <property type="entry name" value="PHOSPHATE ACETYLTRANSFERASE"/>
    <property type="match status" value="1"/>
</dbReference>
<dbReference type="Pfam" id="PF13500">
    <property type="entry name" value="AAA_26"/>
    <property type="match status" value="1"/>
</dbReference>
<dbReference type="Pfam" id="PF07085">
    <property type="entry name" value="DRTGG"/>
    <property type="match status" value="1"/>
</dbReference>
<dbReference type="SUPFAM" id="SSF75138">
    <property type="entry name" value="HprK N-terminal domain-like"/>
    <property type="match status" value="1"/>
</dbReference>
<dbReference type="SUPFAM" id="SSF52540">
    <property type="entry name" value="P-loop containing nucleoside triphosphate hydrolases"/>
    <property type="match status" value="1"/>
</dbReference>
<sequence length="352" mass="38247">MMKCLLVSSVEGYSGKSGIIIALGLKLREMGYEVGYFKALGVNTVKVGDRAVEEDSLITAKILGVEEDVCPVVLDRPYIDFATSVDPVVLRKAVLDRFTEVSEGKDVVIVEGSQNYRTGVAVGIDDASVAKMLSAKVLLVGKYVNDFVVDEVLAAKSAFGTMLEKVVFNQVSGYKMSYIEGIARKVLNEAGLDIVGAIPRNPVLAGLSVEEIREAVSGEYLIEPREEKMVEQVVIGAMSPQSALRYLREARNAALVTGGDRSDLLLTALEMPNVRCLILTGNLEPVQLVLTKAEERGVPVILTGHDTLTAVSRLESVFGRTRIRGEPKVGIMRELFESHVNVKTIIEYLGLD</sequence>